<proteinExistence type="evidence at protein level"/>
<feature type="signal peptide" evidence="2">
    <location>
        <begin position="1"/>
        <end position="24"/>
    </location>
</feature>
<feature type="chain" id="PRO_0000022509" description="Pro-thyrotropin-releasing hormone">
    <location>
        <begin position="25"/>
        <end position="242"/>
    </location>
</feature>
<feature type="peptide" id="PRO_0000022510" description="Thyrotropin-releasing hormone">
    <location>
        <begin position="84"/>
        <end position="86"/>
    </location>
</feature>
<feature type="peptide" id="PRO_0000022511" description="Thyrotropin-releasing hormone">
    <location>
        <begin position="114"/>
        <end position="116"/>
    </location>
</feature>
<feature type="peptide" id="PRO_0000022512" description="Thyrotropin-releasing hormone">
    <location>
        <begin position="135"/>
        <end position="137"/>
    </location>
</feature>
<feature type="peptide" id="PRO_0000022513" description="Thyrotropin-releasing hormone">
    <location>
        <begin position="152"/>
        <end position="154"/>
    </location>
</feature>
<feature type="peptide" id="PRO_0000022514" description="Thyrotropin-releasing hormone">
    <location>
        <begin position="186"/>
        <end position="188"/>
    </location>
</feature>
<feature type="peptide" id="PRO_0000022515" description="Thyrotropin-releasing hormone">
    <location>
        <begin position="227"/>
        <end position="229"/>
    </location>
</feature>
<feature type="region of interest" description="Disordered" evidence="3">
    <location>
        <begin position="63"/>
        <end position="205"/>
    </location>
</feature>
<feature type="region of interest" description="Disordered" evidence="3">
    <location>
        <begin position="220"/>
        <end position="242"/>
    </location>
</feature>
<feature type="compositionally biased region" description="Polar residues" evidence="3">
    <location>
        <begin position="69"/>
        <end position="79"/>
    </location>
</feature>
<feature type="compositionally biased region" description="Acidic residues" evidence="3">
    <location>
        <begin position="91"/>
        <end position="105"/>
    </location>
</feature>
<feature type="compositionally biased region" description="Basic and acidic residues" evidence="3">
    <location>
        <begin position="157"/>
        <end position="167"/>
    </location>
</feature>
<feature type="compositionally biased region" description="Acidic residues" evidence="3">
    <location>
        <begin position="168"/>
        <end position="178"/>
    </location>
</feature>
<feature type="modified residue" description="Proline amide" evidence="1">
    <location>
        <position position="86"/>
    </location>
</feature>
<feature type="modified residue" description="Proline amide" evidence="1">
    <location>
        <position position="116"/>
    </location>
</feature>
<feature type="modified residue" description="Proline amide" evidence="1">
    <location>
        <position position="137"/>
    </location>
</feature>
<feature type="modified residue" description="Proline amide" evidence="1">
    <location>
        <position position="154"/>
    </location>
</feature>
<feature type="modified residue" description="Proline amide" evidence="1">
    <location>
        <position position="188"/>
    </location>
</feature>
<feature type="modified residue" description="Proline amide" evidence="1">
    <location>
        <position position="229"/>
    </location>
</feature>
<feature type="sequence variant" id="VAR_014787" description="In dbSNP:rs5658.">
    <original>L</original>
    <variation>V</variation>
    <location>
        <position position="8"/>
    </location>
</feature>
<comment type="function">
    <text evidence="4">As a component of the hypothalamic-pituitary-thyroid axis, it controls the secretion of thyroid-stimulating hormone (TSH) and is involved in thyroid hormone synthesis regulation. It also operates as modulator of hair growth. It promotes hair-shaft elongation, prolongs the hair cycle growth phase (anagen) and antagonizes its termination (catagen) by TGFB2. It stimulates proliferation and inhibits apoptosis of hair matrix keratinocytes.</text>
</comment>
<comment type="interaction">
    <interactant intactId="EBI-12813975">
        <id>P20396</id>
    </interactant>
    <interactant intactId="EBI-1051469">
        <id>Q6PIL6</id>
        <label>KCNIP4</label>
    </interactant>
    <organismsDiffer>false</organismsDiffer>
    <experiments>3</experiments>
</comment>
<comment type="interaction">
    <interactant intactId="EBI-12813975">
        <id>P20396</id>
    </interactant>
    <interactant intactId="EBI-11911016">
        <id>P80188</id>
        <label>LCN2</label>
    </interactant>
    <organismsDiffer>false</organismsDiffer>
    <experiments>3</experiments>
</comment>
<comment type="subcellular location">
    <subcellularLocation>
        <location>Secreted</location>
    </subcellularLocation>
</comment>
<comment type="tissue specificity">
    <text evidence="4">Hypothalamus. Expressed in the hair follicle epithelium (at protein level).</text>
</comment>
<comment type="similarity">
    <text evidence="5">Belongs to the TRH family.</text>
</comment>
<comment type="online information" name="Wikipedia">
    <link uri="https://en.wikipedia.org/wiki/Thyrotropin-releasing_hormone"/>
    <text>Thyrotropin-releasing hormone entry</text>
</comment>
<keyword id="KW-0027">Amidation</keyword>
<keyword id="KW-0165">Cleavage on pair of basic residues</keyword>
<keyword id="KW-0372">Hormone</keyword>
<keyword id="KW-1267">Proteomics identification</keyword>
<keyword id="KW-1185">Reference proteome</keyword>
<keyword id="KW-0677">Repeat</keyword>
<keyword id="KW-0964">Secreted</keyword>
<keyword id="KW-0732">Signal</keyword>
<evidence type="ECO:0000250" key="1"/>
<evidence type="ECO:0000255" key="2"/>
<evidence type="ECO:0000256" key="3">
    <source>
        <dbReference type="SAM" id="MobiDB-lite"/>
    </source>
</evidence>
<evidence type="ECO:0000269" key="4">
    <source>
    </source>
</evidence>
<evidence type="ECO:0000305" key="5"/>
<name>TRH_HUMAN</name>
<dbReference type="EMBL" id="M63582">
    <property type="protein sequence ID" value="AAA36480.1"/>
    <property type="molecule type" value="Genomic_DNA"/>
</dbReference>
<dbReference type="EMBL" id="M63581">
    <property type="protein sequence ID" value="AAA36480.1"/>
    <property type="status" value="JOINED"/>
    <property type="molecule type" value="Genomic_DNA"/>
</dbReference>
<dbReference type="EMBL" id="AK313473">
    <property type="protein sequence ID" value="BAG36258.1"/>
    <property type="molecule type" value="mRNA"/>
</dbReference>
<dbReference type="EMBL" id="CH471052">
    <property type="protein sequence ID" value="EAW79229.1"/>
    <property type="molecule type" value="Genomic_DNA"/>
</dbReference>
<dbReference type="EMBL" id="BC069375">
    <property type="protein sequence ID" value="AAH69375.1"/>
    <property type="molecule type" value="mRNA"/>
</dbReference>
<dbReference type="EMBL" id="BC074888">
    <property type="protein sequence ID" value="AAH74888.1"/>
    <property type="molecule type" value="mRNA"/>
</dbReference>
<dbReference type="EMBL" id="BC074889">
    <property type="protein sequence ID" value="AAH74889.1"/>
    <property type="molecule type" value="mRNA"/>
</dbReference>
<dbReference type="EMBL" id="BC110515">
    <property type="protein sequence ID" value="AAI10516.1"/>
    <property type="molecule type" value="mRNA"/>
</dbReference>
<dbReference type="EMBL" id="BC110516">
    <property type="protein sequence ID" value="AAI10517.1"/>
    <property type="molecule type" value="mRNA"/>
</dbReference>
<dbReference type="CCDS" id="CCDS3066.1"/>
<dbReference type="PIR" id="A34550">
    <property type="entry name" value="RHHUT"/>
</dbReference>
<dbReference type="RefSeq" id="NP_009048.1">
    <property type="nucleotide sequence ID" value="NM_007117.5"/>
</dbReference>
<dbReference type="BioGRID" id="113051">
    <property type="interactions" value="2"/>
</dbReference>
<dbReference type="FunCoup" id="P20396">
    <property type="interactions" value="386"/>
</dbReference>
<dbReference type="IntAct" id="P20396">
    <property type="interactions" value="2"/>
</dbReference>
<dbReference type="STRING" id="9606.ENSP00000303452"/>
<dbReference type="BindingDB" id="P20396"/>
<dbReference type="iPTMnet" id="P20396"/>
<dbReference type="PhosphoSitePlus" id="P20396"/>
<dbReference type="BioMuta" id="TRH"/>
<dbReference type="DMDM" id="135841"/>
<dbReference type="MassIVE" id="P20396"/>
<dbReference type="PaxDb" id="9606-ENSP00000303452"/>
<dbReference type="PeptideAtlas" id="P20396"/>
<dbReference type="ProteomicsDB" id="53760"/>
<dbReference type="Antibodypedia" id="33301">
    <property type="antibodies" value="139 antibodies from 26 providers"/>
</dbReference>
<dbReference type="DNASU" id="7200"/>
<dbReference type="Ensembl" id="ENST00000302649.4">
    <property type="protein sequence ID" value="ENSP00000303452.3"/>
    <property type="gene ID" value="ENSG00000170893.4"/>
</dbReference>
<dbReference type="GeneID" id="7200"/>
<dbReference type="KEGG" id="hsa:7200"/>
<dbReference type="MANE-Select" id="ENST00000302649.4">
    <property type="protein sequence ID" value="ENSP00000303452.3"/>
    <property type="RefSeq nucleotide sequence ID" value="NM_007117.5"/>
    <property type="RefSeq protein sequence ID" value="NP_009048.1"/>
</dbReference>
<dbReference type="UCSC" id="uc003enc.5">
    <property type="organism name" value="human"/>
</dbReference>
<dbReference type="AGR" id="HGNC:12298"/>
<dbReference type="CTD" id="7200"/>
<dbReference type="DisGeNET" id="7200"/>
<dbReference type="GeneCards" id="TRH"/>
<dbReference type="HGNC" id="HGNC:12298">
    <property type="gene designation" value="TRH"/>
</dbReference>
<dbReference type="HPA" id="ENSG00000170893">
    <property type="expression patterns" value="Group enriched (brain, cervix, endometrium, retina)"/>
</dbReference>
<dbReference type="MalaCards" id="TRH"/>
<dbReference type="MIM" id="613879">
    <property type="type" value="gene"/>
</dbReference>
<dbReference type="neXtProt" id="NX_P20396"/>
<dbReference type="OpenTargets" id="ENSG00000170893"/>
<dbReference type="Orphanet" id="238670">
    <property type="disease" value="Isolated thyrotropin-releasing hormone deficiency"/>
</dbReference>
<dbReference type="PharmGKB" id="PA36978"/>
<dbReference type="VEuPathDB" id="HostDB:ENSG00000170893"/>
<dbReference type="eggNOG" id="ENOG502RWH0">
    <property type="taxonomic scope" value="Eukaryota"/>
</dbReference>
<dbReference type="GeneTree" id="ENSGT00390000016951"/>
<dbReference type="InParanoid" id="P20396"/>
<dbReference type="OMA" id="PDWFSKR"/>
<dbReference type="OrthoDB" id="9949225at2759"/>
<dbReference type="PAN-GO" id="P20396">
    <property type="GO annotations" value="9 GO annotations based on evolutionary models"/>
</dbReference>
<dbReference type="PhylomeDB" id="P20396"/>
<dbReference type="TreeFam" id="TF332073"/>
<dbReference type="PathwayCommons" id="P20396"/>
<dbReference type="Reactome" id="R-HSA-375276">
    <property type="pathway name" value="Peptide ligand-binding receptors"/>
</dbReference>
<dbReference type="Reactome" id="R-HSA-416476">
    <property type="pathway name" value="G alpha (q) signalling events"/>
</dbReference>
<dbReference type="SignaLink" id="P20396"/>
<dbReference type="SIGNOR" id="P20396"/>
<dbReference type="BioGRID-ORCS" id="7200">
    <property type="hits" value="10 hits in 1149 CRISPR screens"/>
</dbReference>
<dbReference type="GenomeRNAi" id="7200"/>
<dbReference type="Pharos" id="P20396">
    <property type="development level" value="Tbio"/>
</dbReference>
<dbReference type="PRO" id="PR:P20396"/>
<dbReference type="Proteomes" id="UP000005640">
    <property type="component" value="Chromosome 3"/>
</dbReference>
<dbReference type="RNAct" id="P20396">
    <property type="molecule type" value="protein"/>
</dbReference>
<dbReference type="Bgee" id="ENSG00000170893">
    <property type="expression patterns" value="Expressed in male germ line stem cell (sensu Vertebrata) in testis and 112 other cell types or tissues"/>
</dbReference>
<dbReference type="ExpressionAtlas" id="P20396">
    <property type="expression patterns" value="baseline and differential"/>
</dbReference>
<dbReference type="GO" id="GO:0005576">
    <property type="term" value="C:extracellular region"/>
    <property type="evidence" value="ECO:0000304"/>
    <property type="project" value="Reactome"/>
</dbReference>
<dbReference type="GO" id="GO:0030141">
    <property type="term" value="C:secretory granule"/>
    <property type="evidence" value="ECO:0000318"/>
    <property type="project" value="GO_Central"/>
</dbReference>
<dbReference type="GO" id="GO:0008437">
    <property type="term" value="F:thyrotropin-releasing hormone activity"/>
    <property type="evidence" value="ECO:0000318"/>
    <property type="project" value="GO_Central"/>
</dbReference>
<dbReference type="GO" id="GO:0007628">
    <property type="term" value="P:adult walking behavior"/>
    <property type="evidence" value="ECO:0007669"/>
    <property type="project" value="Ensembl"/>
</dbReference>
<dbReference type="GO" id="GO:0007267">
    <property type="term" value="P:cell-cell signaling"/>
    <property type="evidence" value="ECO:0000304"/>
    <property type="project" value="ProtInc"/>
</dbReference>
<dbReference type="GO" id="GO:0042755">
    <property type="term" value="P:eating behavior"/>
    <property type="evidence" value="ECO:0000318"/>
    <property type="project" value="GO_Central"/>
</dbReference>
<dbReference type="GO" id="GO:0001692">
    <property type="term" value="P:histamine metabolic process"/>
    <property type="evidence" value="ECO:0000318"/>
    <property type="project" value="GO_Central"/>
</dbReference>
<dbReference type="GO" id="GO:0009755">
    <property type="term" value="P:hormone-mediated signaling pathway"/>
    <property type="evidence" value="ECO:0007669"/>
    <property type="project" value="InterPro"/>
</dbReference>
<dbReference type="GO" id="GO:0014050">
    <property type="term" value="P:negative regulation of glutamate secretion"/>
    <property type="evidence" value="ECO:0000318"/>
    <property type="project" value="GO_Central"/>
</dbReference>
<dbReference type="GO" id="GO:0014054">
    <property type="term" value="P:positive regulation of gamma-aminobutyric acid secretion"/>
    <property type="evidence" value="ECO:0000318"/>
    <property type="project" value="GO_Central"/>
</dbReference>
<dbReference type="GO" id="GO:0032024">
    <property type="term" value="P:positive regulation of insulin secretion"/>
    <property type="evidence" value="ECO:0000318"/>
    <property type="project" value="GO_Central"/>
</dbReference>
<dbReference type="GO" id="GO:0007165">
    <property type="term" value="P:signal transduction"/>
    <property type="evidence" value="ECO:0000304"/>
    <property type="project" value="ProtInc"/>
</dbReference>
<dbReference type="InterPro" id="IPR008857">
    <property type="entry name" value="TRH"/>
</dbReference>
<dbReference type="PANTHER" id="PTHR17530">
    <property type="entry name" value="PRO-THYROTROPIN-RELEASING HORMONE"/>
    <property type="match status" value="1"/>
</dbReference>
<dbReference type="PANTHER" id="PTHR17530:SF2">
    <property type="entry name" value="PRO-THYROTROPIN-RELEASING HORMONE"/>
    <property type="match status" value="1"/>
</dbReference>
<dbReference type="Pfam" id="PF05438">
    <property type="entry name" value="TRH"/>
    <property type="match status" value="1"/>
</dbReference>
<dbReference type="PIRSF" id="PIRSF001795">
    <property type="entry name" value="TRH"/>
    <property type="match status" value="1"/>
</dbReference>
<accession>P20396</accession>
<accession>B2R8R1</accession>
<accession>Q2TB83</accession>
<protein>
    <recommendedName>
        <fullName>Pro-thyrotropin-releasing hormone</fullName>
        <shortName>Pro-TRH</shortName>
    </recommendedName>
    <alternativeName>
        <fullName>Prothyroliberin</fullName>
    </alternativeName>
    <component>
        <recommendedName>
            <fullName>Thyrotropin-releasing hormone</fullName>
            <shortName>TRH</shortName>
        </recommendedName>
        <alternativeName>
            <fullName>Protirelin</fullName>
        </alternativeName>
        <alternativeName>
            <fullName>TSH-releasing factor</fullName>
        </alternativeName>
        <alternativeName>
            <fullName>Thyroliberin</fullName>
        </alternativeName>
        <alternativeName>
            <fullName>Thyrotropin-releasing factor</fullName>
            <shortName>TRF</shortName>
        </alternativeName>
    </component>
</protein>
<reference key="1">
    <citation type="journal article" date="1990" name="Mol. Endocrinol.">
        <title>Cloning and structure of human genomic DNA and hypothalamic cDNA encoding human prepro thyrotropin-releasing hormone.</title>
        <authorList>
            <person name="Yamada M."/>
            <person name="Radovick S."/>
            <person name="Wondisford F.E."/>
            <person name="Nakayama Y."/>
            <person name="Weintraub B.D."/>
            <person name="Wilber J.F."/>
        </authorList>
    </citation>
    <scope>NUCLEOTIDE SEQUENCE [GENOMIC DNA / MRNA]</scope>
</reference>
<reference key="2">
    <citation type="journal article" date="2004" name="Nat. Genet.">
        <title>Complete sequencing and characterization of 21,243 full-length human cDNAs.</title>
        <authorList>
            <person name="Ota T."/>
            <person name="Suzuki Y."/>
            <person name="Nishikawa T."/>
            <person name="Otsuki T."/>
            <person name="Sugiyama T."/>
            <person name="Irie R."/>
            <person name="Wakamatsu A."/>
            <person name="Hayashi K."/>
            <person name="Sato H."/>
            <person name="Nagai K."/>
            <person name="Kimura K."/>
            <person name="Makita H."/>
            <person name="Sekine M."/>
            <person name="Obayashi M."/>
            <person name="Nishi T."/>
            <person name="Shibahara T."/>
            <person name="Tanaka T."/>
            <person name="Ishii S."/>
            <person name="Yamamoto J."/>
            <person name="Saito K."/>
            <person name="Kawai Y."/>
            <person name="Isono Y."/>
            <person name="Nakamura Y."/>
            <person name="Nagahari K."/>
            <person name="Murakami K."/>
            <person name="Yasuda T."/>
            <person name="Iwayanagi T."/>
            <person name="Wagatsuma M."/>
            <person name="Shiratori A."/>
            <person name="Sudo H."/>
            <person name="Hosoiri T."/>
            <person name="Kaku Y."/>
            <person name="Kodaira H."/>
            <person name="Kondo H."/>
            <person name="Sugawara M."/>
            <person name="Takahashi M."/>
            <person name="Kanda K."/>
            <person name="Yokoi T."/>
            <person name="Furuya T."/>
            <person name="Kikkawa E."/>
            <person name="Omura Y."/>
            <person name="Abe K."/>
            <person name="Kamihara K."/>
            <person name="Katsuta N."/>
            <person name="Sato K."/>
            <person name="Tanikawa M."/>
            <person name="Yamazaki M."/>
            <person name="Ninomiya K."/>
            <person name="Ishibashi T."/>
            <person name="Yamashita H."/>
            <person name="Murakawa K."/>
            <person name="Fujimori K."/>
            <person name="Tanai H."/>
            <person name="Kimata M."/>
            <person name="Watanabe M."/>
            <person name="Hiraoka S."/>
            <person name="Chiba Y."/>
            <person name="Ishida S."/>
            <person name="Ono Y."/>
            <person name="Takiguchi S."/>
            <person name="Watanabe S."/>
            <person name="Yosida M."/>
            <person name="Hotuta T."/>
            <person name="Kusano J."/>
            <person name="Kanehori K."/>
            <person name="Takahashi-Fujii A."/>
            <person name="Hara H."/>
            <person name="Tanase T.-O."/>
            <person name="Nomura Y."/>
            <person name="Togiya S."/>
            <person name="Komai F."/>
            <person name="Hara R."/>
            <person name="Takeuchi K."/>
            <person name="Arita M."/>
            <person name="Imose N."/>
            <person name="Musashino K."/>
            <person name="Yuuki H."/>
            <person name="Oshima A."/>
            <person name="Sasaki N."/>
            <person name="Aotsuka S."/>
            <person name="Yoshikawa Y."/>
            <person name="Matsunawa H."/>
            <person name="Ichihara T."/>
            <person name="Shiohata N."/>
            <person name="Sano S."/>
            <person name="Moriya S."/>
            <person name="Momiyama H."/>
            <person name="Satoh N."/>
            <person name="Takami S."/>
            <person name="Terashima Y."/>
            <person name="Suzuki O."/>
            <person name="Nakagawa S."/>
            <person name="Senoh A."/>
            <person name="Mizoguchi H."/>
            <person name="Goto Y."/>
            <person name="Shimizu F."/>
            <person name="Wakebe H."/>
            <person name="Hishigaki H."/>
            <person name="Watanabe T."/>
            <person name="Sugiyama A."/>
            <person name="Takemoto M."/>
            <person name="Kawakami B."/>
            <person name="Yamazaki M."/>
            <person name="Watanabe K."/>
            <person name="Kumagai A."/>
            <person name="Itakura S."/>
            <person name="Fukuzumi Y."/>
            <person name="Fujimori Y."/>
            <person name="Komiyama M."/>
            <person name="Tashiro H."/>
            <person name="Tanigami A."/>
            <person name="Fujiwara T."/>
            <person name="Ono T."/>
            <person name="Yamada K."/>
            <person name="Fujii Y."/>
            <person name="Ozaki K."/>
            <person name="Hirao M."/>
            <person name="Ohmori Y."/>
            <person name="Kawabata A."/>
            <person name="Hikiji T."/>
            <person name="Kobatake N."/>
            <person name="Inagaki H."/>
            <person name="Ikema Y."/>
            <person name="Okamoto S."/>
            <person name="Okitani R."/>
            <person name="Kawakami T."/>
            <person name="Noguchi S."/>
            <person name="Itoh T."/>
            <person name="Shigeta K."/>
            <person name="Senba T."/>
            <person name="Matsumura K."/>
            <person name="Nakajima Y."/>
            <person name="Mizuno T."/>
            <person name="Morinaga M."/>
            <person name="Sasaki M."/>
            <person name="Togashi T."/>
            <person name="Oyama M."/>
            <person name="Hata H."/>
            <person name="Watanabe M."/>
            <person name="Komatsu T."/>
            <person name="Mizushima-Sugano J."/>
            <person name="Satoh T."/>
            <person name="Shirai Y."/>
            <person name="Takahashi Y."/>
            <person name="Nakagawa K."/>
            <person name="Okumura K."/>
            <person name="Nagase T."/>
            <person name="Nomura N."/>
            <person name="Kikuchi H."/>
            <person name="Masuho Y."/>
            <person name="Yamashita R."/>
            <person name="Nakai K."/>
            <person name="Yada T."/>
            <person name="Nakamura Y."/>
            <person name="Ohara O."/>
            <person name="Isogai T."/>
            <person name="Sugano S."/>
        </authorList>
    </citation>
    <scope>NUCLEOTIDE SEQUENCE [LARGE SCALE MRNA]</scope>
    <source>
        <tissue>Subthalamic nucleus</tissue>
    </source>
</reference>
<reference key="3">
    <citation type="submission" date="2005-09" db="EMBL/GenBank/DDBJ databases">
        <authorList>
            <person name="Mural R.J."/>
            <person name="Istrail S."/>
            <person name="Sutton G.G."/>
            <person name="Florea L."/>
            <person name="Halpern A.L."/>
            <person name="Mobarry C.M."/>
            <person name="Lippert R."/>
            <person name="Walenz B."/>
            <person name="Shatkay H."/>
            <person name="Dew I."/>
            <person name="Miller J.R."/>
            <person name="Flanigan M.J."/>
            <person name="Edwards N.J."/>
            <person name="Bolanos R."/>
            <person name="Fasulo D."/>
            <person name="Halldorsson B.V."/>
            <person name="Hannenhalli S."/>
            <person name="Turner R."/>
            <person name="Yooseph S."/>
            <person name="Lu F."/>
            <person name="Nusskern D.R."/>
            <person name="Shue B.C."/>
            <person name="Zheng X.H."/>
            <person name="Zhong F."/>
            <person name="Delcher A.L."/>
            <person name="Huson D.H."/>
            <person name="Kravitz S.A."/>
            <person name="Mouchard L."/>
            <person name="Reinert K."/>
            <person name="Remington K.A."/>
            <person name="Clark A.G."/>
            <person name="Waterman M.S."/>
            <person name="Eichler E.E."/>
            <person name="Adams M.D."/>
            <person name="Hunkapiller M.W."/>
            <person name="Myers E.W."/>
            <person name="Venter J.C."/>
        </authorList>
    </citation>
    <scope>NUCLEOTIDE SEQUENCE [LARGE SCALE GENOMIC DNA]</scope>
</reference>
<reference key="4">
    <citation type="journal article" date="2004" name="Genome Res.">
        <title>The status, quality, and expansion of the NIH full-length cDNA project: the Mammalian Gene Collection (MGC).</title>
        <authorList>
            <consortium name="The MGC Project Team"/>
        </authorList>
    </citation>
    <scope>NUCLEOTIDE SEQUENCE [LARGE SCALE MRNA]</scope>
    <source>
        <tissue>Lung</tissue>
    </source>
</reference>
<reference key="5">
    <citation type="journal article" date="2010" name="FASEB J.">
        <title>Thyrotropin releasing hormone (TRH): a new player in human hair-growth control.</title>
        <authorList>
            <person name="Gaspar E."/>
            <person name="Hardenbicker C."/>
            <person name="Bodo E."/>
            <person name="Wenzel B."/>
            <person name="Ramot Y."/>
            <person name="Funk W."/>
            <person name="Kromminga A."/>
            <person name="Paus R."/>
        </authorList>
    </citation>
    <scope>FUNCTION</scope>
    <scope>TISSUE SPECIFICITY</scope>
</reference>
<organism>
    <name type="scientific">Homo sapiens</name>
    <name type="common">Human</name>
    <dbReference type="NCBI Taxonomy" id="9606"/>
    <lineage>
        <taxon>Eukaryota</taxon>
        <taxon>Metazoa</taxon>
        <taxon>Chordata</taxon>
        <taxon>Craniata</taxon>
        <taxon>Vertebrata</taxon>
        <taxon>Euteleostomi</taxon>
        <taxon>Mammalia</taxon>
        <taxon>Eutheria</taxon>
        <taxon>Euarchontoglires</taxon>
        <taxon>Primates</taxon>
        <taxon>Haplorrhini</taxon>
        <taxon>Catarrhini</taxon>
        <taxon>Hominidae</taxon>
        <taxon>Homo</taxon>
    </lineage>
</organism>
<sequence length="242" mass="27404">MPGPWLLLALALTLNLTGVPGGRAQPEAAQQEAVTAAEHPGLDDFLRQVERLLFLRENIQRLQGDQGEHSASQIFQSDWLSKRQHPGKREEEEEEGVEEEEEEEGGAVGPHKRQHPGRREDEASWSVDVTQHKRQHPGRRSPWLAYAVPKRQHPGRRLADPKAQRSWEEEEEEEEREEDLMPEKRQHPGKRALGGPCGPQGAYGQAGLLLGLLDDLSRSQGAEEKRQHPGRRAAWVREPLEE</sequence>
<gene>
    <name type="primary">TRH</name>
</gene>